<evidence type="ECO:0000255" key="1">
    <source>
        <dbReference type="HAMAP-Rule" id="MF_00588"/>
    </source>
</evidence>
<protein>
    <recommendedName>
        <fullName evidence="1">Glutamyl-tRNA(Gln) amidotransferase subunit E</fullName>
        <shortName evidence="1">Glu-ADT subunit E</shortName>
        <ecNumber evidence="1">6.3.5.-</ecNumber>
    </recommendedName>
</protein>
<feature type="chain" id="PRO_1000212161" description="Glutamyl-tRNA(Gln) amidotransferase subunit E">
    <location>
        <begin position="1"/>
        <end position="633"/>
    </location>
</feature>
<dbReference type="EC" id="6.3.5.-" evidence="1"/>
<dbReference type="EMBL" id="CP001403">
    <property type="protein sequence ID" value="ACP45541.1"/>
    <property type="molecule type" value="Genomic_DNA"/>
</dbReference>
<dbReference type="RefSeq" id="WP_012711296.1">
    <property type="nucleotide sequence ID" value="NC_012622.1"/>
</dbReference>
<dbReference type="SMR" id="C3NE02"/>
<dbReference type="GeneID" id="7941021"/>
<dbReference type="KEGG" id="siy:YG5714_1275"/>
<dbReference type="HOGENOM" id="CLU_030702_0_0_2"/>
<dbReference type="Proteomes" id="UP000002308">
    <property type="component" value="Chromosome"/>
</dbReference>
<dbReference type="GO" id="GO:0005737">
    <property type="term" value="C:cytoplasm"/>
    <property type="evidence" value="ECO:0007669"/>
    <property type="project" value="InterPro"/>
</dbReference>
<dbReference type="GO" id="GO:0004812">
    <property type="term" value="F:aminoacyl-tRNA ligase activity"/>
    <property type="evidence" value="ECO:0007669"/>
    <property type="project" value="InterPro"/>
</dbReference>
<dbReference type="GO" id="GO:0005524">
    <property type="term" value="F:ATP binding"/>
    <property type="evidence" value="ECO:0007669"/>
    <property type="project" value="UniProtKB-KW"/>
</dbReference>
<dbReference type="GO" id="GO:0050567">
    <property type="term" value="F:glutaminyl-tRNA synthase (glutamine-hydrolyzing) activity"/>
    <property type="evidence" value="ECO:0007669"/>
    <property type="project" value="UniProtKB-UniRule"/>
</dbReference>
<dbReference type="GO" id="GO:0070681">
    <property type="term" value="P:glutaminyl-tRNAGln biosynthesis via transamidation"/>
    <property type="evidence" value="ECO:0007669"/>
    <property type="project" value="TreeGrafter"/>
</dbReference>
<dbReference type="GO" id="GO:0006412">
    <property type="term" value="P:translation"/>
    <property type="evidence" value="ECO:0007669"/>
    <property type="project" value="UniProtKB-UniRule"/>
</dbReference>
<dbReference type="FunFam" id="1.10.150.380:FF:000002">
    <property type="entry name" value="Glutamyl-tRNA(Gln) amidotransferase subunit E"/>
    <property type="match status" value="1"/>
</dbReference>
<dbReference type="FunFam" id="3.30.1360.30:FF:000003">
    <property type="entry name" value="Glutamyl-tRNA(Gln) amidotransferase subunit E"/>
    <property type="match status" value="1"/>
</dbReference>
<dbReference type="Gene3D" id="1.10.10.410">
    <property type="match status" value="1"/>
</dbReference>
<dbReference type="Gene3D" id="3.30.1360.30">
    <property type="entry name" value="GAD-like domain"/>
    <property type="match status" value="1"/>
</dbReference>
<dbReference type="Gene3D" id="1.10.150.380">
    <property type="entry name" value="GatB domain, N-terminal subdomain"/>
    <property type="match status" value="1"/>
</dbReference>
<dbReference type="HAMAP" id="MF_00588">
    <property type="entry name" value="GatE"/>
    <property type="match status" value="1"/>
</dbReference>
<dbReference type="InterPro" id="IPR017959">
    <property type="entry name" value="Asn/Gln-tRNA_amidoTrfase_suB/E"/>
</dbReference>
<dbReference type="InterPro" id="IPR006075">
    <property type="entry name" value="Asn/Gln-tRNA_Trfase_suB/E_cat"/>
</dbReference>
<dbReference type="InterPro" id="IPR018027">
    <property type="entry name" value="Asn/Gln_amidotransferase"/>
</dbReference>
<dbReference type="InterPro" id="IPR003789">
    <property type="entry name" value="Asn/Gln_tRNA_amidoTrase-B-like"/>
</dbReference>
<dbReference type="InterPro" id="IPR004115">
    <property type="entry name" value="GAD-like_sf"/>
</dbReference>
<dbReference type="InterPro" id="IPR029351">
    <property type="entry name" value="GAD_dom"/>
</dbReference>
<dbReference type="InterPro" id="IPR042114">
    <property type="entry name" value="GatB_C_1"/>
</dbReference>
<dbReference type="InterPro" id="IPR023168">
    <property type="entry name" value="GatB_Yqey_C_2"/>
</dbReference>
<dbReference type="InterPro" id="IPR004414">
    <property type="entry name" value="GatE"/>
</dbReference>
<dbReference type="InterPro" id="IPR017958">
    <property type="entry name" value="Gln-tRNA_amidoTrfase_suB_CS"/>
</dbReference>
<dbReference type="InterPro" id="IPR014746">
    <property type="entry name" value="Gln_synth/guanido_kin_cat_dom"/>
</dbReference>
<dbReference type="NCBIfam" id="TIGR00134">
    <property type="entry name" value="gatE_arch"/>
    <property type="match status" value="1"/>
</dbReference>
<dbReference type="NCBIfam" id="NF003107">
    <property type="entry name" value="PRK04028.1"/>
    <property type="match status" value="1"/>
</dbReference>
<dbReference type="PANTHER" id="PTHR11659">
    <property type="entry name" value="GLUTAMYL-TRNA GLN AMIDOTRANSFERASE SUBUNIT B MITOCHONDRIAL AND PROKARYOTIC PET112-RELATED"/>
    <property type="match status" value="1"/>
</dbReference>
<dbReference type="PANTHER" id="PTHR11659:SF2">
    <property type="entry name" value="GLUTAMYL-TRNA(GLN) AMIDOTRANSFERASE SUBUNIT E"/>
    <property type="match status" value="1"/>
</dbReference>
<dbReference type="Pfam" id="PF02938">
    <property type="entry name" value="GAD"/>
    <property type="match status" value="1"/>
</dbReference>
<dbReference type="Pfam" id="PF02934">
    <property type="entry name" value="GatB_N"/>
    <property type="match status" value="1"/>
</dbReference>
<dbReference type="Pfam" id="PF02637">
    <property type="entry name" value="GatB_Yqey"/>
    <property type="match status" value="1"/>
</dbReference>
<dbReference type="SMART" id="SM00845">
    <property type="entry name" value="GatB_Yqey"/>
    <property type="match status" value="1"/>
</dbReference>
<dbReference type="SUPFAM" id="SSF55261">
    <property type="entry name" value="GAD domain-like"/>
    <property type="match status" value="1"/>
</dbReference>
<dbReference type="SUPFAM" id="SSF89095">
    <property type="entry name" value="GatB/YqeY motif"/>
    <property type="match status" value="1"/>
</dbReference>
<dbReference type="SUPFAM" id="SSF55931">
    <property type="entry name" value="Glutamine synthetase/guanido kinase"/>
    <property type="match status" value="1"/>
</dbReference>
<dbReference type="PROSITE" id="PS01234">
    <property type="entry name" value="GATB"/>
    <property type="match status" value="1"/>
</dbReference>
<organism>
    <name type="scientific">Saccharolobus islandicus (strain Y.G.57.14 / Yellowstone #1)</name>
    <name type="common">Sulfolobus islandicus</name>
    <dbReference type="NCBI Taxonomy" id="439386"/>
    <lineage>
        <taxon>Archaea</taxon>
        <taxon>Thermoproteota</taxon>
        <taxon>Thermoprotei</taxon>
        <taxon>Sulfolobales</taxon>
        <taxon>Sulfolobaceae</taxon>
        <taxon>Saccharolobus</taxon>
    </lineage>
</organism>
<reference key="1">
    <citation type="journal article" date="2009" name="Proc. Natl. Acad. Sci. U.S.A.">
        <title>Biogeography of the Sulfolobus islandicus pan-genome.</title>
        <authorList>
            <person name="Reno M.L."/>
            <person name="Held N.L."/>
            <person name="Fields C.J."/>
            <person name="Burke P.V."/>
            <person name="Whitaker R.J."/>
        </authorList>
    </citation>
    <scope>NUCLEOTIDE SEQUENCE [LARGE SCALE GENOMIC DNA]</scope>
    <source>
        <strain>Y.G.57.14 / Yellowstone #1</strain>
    </source>
</reference>
<accession>C3NE02</accession>
<sequence>MSELNYEELGLKVGLEIHQQLNTSHKLFCNCSTNLKEDYKLTLERYLRPALSELGEVDVAALFEWKKGKKYVYRIPITTSCLVEADEEPPHAINEEALKIALAIAIALNSNIVDEIYVMRKIVIDGSNTTGFQRTAIVALGGMLKDEGVTIQTIAVEEDAARKIDERTDQVTYSLDRLGIPLIEISTGPDIRSPEQAERVALKIGQLLRMTGKVKRGIGTIRQDLNISIKGGTKIEIKGVQKLELIPDIVRYEAMRQFNLLKIKEELNKRGVSKNLILSNFVVKDLTELFKNTNSKIIKSGIEKGGLVYGIRAYKLKGILGWELIPKKRRFGTEIADYVRALAELGGLFHSDELPNYGITEEEINKVREALNATTEDGFILIVGERERLDKAVEVIRDRILLAFDGIPKETRGALDDGTTKFLRPQPSSARMYPETDIPPRRIDEKLLEDAKKFVPESPESKMKRYITLGLSEELAKEIIRDPRLDLFEELVNKYSPKVSPVVIASTITNTLKYVKSKGGDISKINEEDIEELIKSVYENKISKDSISEILLEYTTNKNVELKDVIRKYEALPTEELEKIIDDVISSNLDEIRKRKDKAVNLIMSKVMSKVKGRAEGKVILELIKSRLKNVME</sequence>
<gene>
    <name evidence="1" type="primary">gatE</name>
    <name type="ordered locus">YG5714_1275</name>
</gene>
<keyword id="KW-0067">ATP-binding</keyword>
<keyword id="KW-0436">Ligase</keyword>
<keyword id="KW-0547">Nucleotide-binding</keyword>
<keyword id="KW-0648">Protein biosynthesis</keyword>
<name>GATE_SACI7</name>
<comment type="function">
    <text evidence="1">Allows the formation of correctly charged Gln-tRNA(Gln) through the transamidation of misacylated Glu-tRNA(Gln) in organisms which lack glutaminyl-tRNA synthetase. The reaction takes place in the presence of glutamine and ATP through an activated gamma-phospho-Glu-tRNA(Gln). The GatDE system is specific for glutamate and does not act on aspartate.</text>
</comment>
<comment type="catalytic activity">
    <reaction evidence="1">
        <text>L-glutamyl-tRNA(Gln) + L-glutamine + ATP + H2O = L-glutaminyl-tRNA(Gln) + L-glutamate + ADP + phosphate + H(+)</text>
        <dbReference type="Rhea" id="RHEA:17521"/>
        <dbReference type="Rhea" id="RHEA-COMP:9681"/>
        <dbReference type="Rhea" id="RHEA-COMP:9684"/>
        <dbReference type="ChEBI" id="CHEBI:15377"/>
        <dbReference type="ChEBI" id="CHEBI:15378"/>
        <dbReference type="ChEBI" id="CHEBI:29985"/>
        <dbReference type="ChEBI" id="CHEBI:30616"/>
        <dbReference type="ChEBI" id="CHEBI:43474"/>
        <dbReference type="ChEBI" id="CHEBI:58359"/>
        <dbReference type="ChEBI" id="CHEBI:78520"/>
        <dbReference type="ChEBI" id="CHEBI:78521"/>
        <dbReference type="ChEBI" id="CHEBI:456216"/>
    </reaction>
</comment>
<comment type="subunit">
    <text evidence="1">Heterodimer of GatD and GatE.</text>
</comment>
<comment type="similarity">
    <text evidence="1">Belongs to the GatB/GatE family. GatE subfamily.</text>
</comment>
<proteinExistence type="inferred from homology"/>